<accession>A7ZR07</accession>
<comment type="function">
    <text evidence="1">Folate-binding protein involved in regulating the level of ATP-DnaA and in the modification of some tRNAs. It is probably a key factor in regulatory networks that act via tRNA modification, such as initiation of chromosomal replication.</text>
</comment>
<comment type="subcellular location">
    <subcellularLocation>
        <location evidence="1">Cytoplasm</location>
    </subcellularLocation>
</comment>
<comment type="similarity">
    <text evidence="1">Belongs to the tRNA-modifying YgfZ family.</text>
</comment>
<proteinExistence type="inferred from homology"/>
<sequence>MAFTPFPPRQPTASARLPLTLMTLDDWALATITGADSEKYMQGQVTADVSQMAEDQHLLAAHCDAKGKMWSNLRLFRDGDGFAWIERRSVREPQLTELKKYAVFSKVTIAPDDERVLLGVAGFQARAALANLFSELPSKEKQVVKEGATTLLWFEHPAERFLIVTDEATANMLTDKLRGEAELNNSQQWLALNIEAGFPVIDAANSGQFIPQATNLQALGGISFKKGCYTGQEMVARAKFRGANKRALWLLAGSASRLPEAGEDLELKMGENWRRTGTVLAAVKLEDGQVVVQVVMNNDMEPDSIFRVRDDANTLHIEPLPYSLEE</sequence>
<reference key="1">
    <citation type="journal article" date="2008" name="J. Bacteriol.">
        <title>The pangenome structure of Escherichia coli: comparative genomic analysis of E. coli commensal and pathogenic isolates.</title>
        <authorList>
            <person name="Rasko D.A."/>
            <person name="Rosovitz M.J."/>
            <person name="Myers G.S.A."/>
            <person name="Mongodin E.F."/>
            <person name="Fricke W.F."/>
            <person name="Gajer P."/>
            <person name="Crabtree J."/>
            <person name="Sebaihia M."/>
            <person name="Thomson N.R."/>
            <person name="Chaudhuri R."/>
            <person name="Henderson I.R."/>
            <person name="Sperandio V."/>
            <person name="Ravel J."/>
        </authorList>
    </citation>
    <scope>NUCLEOTIDE SEQUENCE [LARGE SCALE GENOMIC DNA]</scope>
    <source>
        <strain>E24377A / ETEC</strain>
    </source>
</reference>
<evidence type="ECO:0000255" key="1">
    <source>
        <dbReference type="HAMAP-Rule" id="MF_01175"/>
    </source>
</evidence>
<feature type="chain" id="PRO_1000065772" description="tRNA-modifying protein YgfZ">
    <location>
        <begin position="1"/>
        <end position="326"/>
    </location>
</feature>
<feature type="binding site" evidence="1">
    <location>
        <position position="27"/>
    </location>
    <ligand>
        <name>folate</name>
        <dbReference type="ChEBI" id="CHEBI:62501"/>
    </ligand>
</feature>
<feature type="binding site" evidence="1">
    <location>
        <position position="189"/>
    </location>
    <ligand>
        <name>folate</name>
        <dbReference type="ChEBI" id="CHEBI:62501"/>
    </ligand>
</feature>
<dbReference type="EMBL" id="CP000800">
    <property type="protein sequence ID" value="ABV18133.1"/>
    <property type="molecule type" value="Genomic_DNA"/>
</dbReference>
<dbReference type="RefSeq" id="WP_000886062.1">
    <property type="nucleotide sequence ID" value="NC_009801.1"/>
</dbReference>
<dbReference type="SMR" id="A7ZR07"/>
<dbReference type="GeneID" id="75205265"/>
<dbReference type="KEGG" id="ecw:EcE24377A_3225"/>
<dbReference type="HOGENOM" id="CLU_007884_6_1_6"/>
<dbReference type="Proteomes" id="UP000001122">
    <property type="component" value="Chromosome"/>
</dbReference>
<dbReference type="GO" id="GO:0005737">
    <property type="term" value="C:cytoplasm"/>
    <property type="evidence" value="ECO:0007669"/>
    <property type="project" value="UniProtKB-SubCell"/>
</dbReference>
<dbReference type="GO" id="GO:0005542">
    <property type="term" value="F:folic acid binding"/>
    <property type="evidence" value="ECO:0007669"/>
    <property type="project" value="UniProtKB-UniRule"/>
</dbReference>
<dbReference type="GO" id="GO:0016226">
    <property type="term" value="P:iron-sulfur cluster assembly"/>
    <property type="evidence" value="ECO:0007669"/>
    <property type="project" value="TreeGrafter"/>
</dbReference>
<dbReference type="GO" id="GO:0009451">
    <property type="term" value="P:RNA modification"/>
    <property type="evidence" value="ECO:0007669"/>
    <property type="project" value="InterPro"/>
</dbReference>
<dbReference type="GO" id="GO:0008033">
    <property type="term" value="P:tRNA processing"/>
    <property type="evidence" value="ECO:0007669"/>
    <property type="project" value="UniProtKB-UniRule"/>
</dbReference>
<dbReference type="FunFam" id="2.40.30.160:FF:000001">
    <property type="entry name" value="tRNA-modifying protein YgfZ"/>
    <property type="match status" value="1"/>
</dbReference>
<dbReference type="FunFam" id="3.30.70.1400:FF:000002">
    <property type="entry name" value="tRNA-modifying protein YgfZ"/>
    <property type="match status" value="1"/>
</dbReference>
<dbReference type="FunFam" id="3.30.70.1630:FF:000001">
    <property type="entry name" value="tRNA-modifying protein YgfZ"/>
    <property type="match status" value="1"/>
</dbReference>
<dbReference type="Gene3D" id="2.40.30.160">
    <property type="match status" value="1"/>
</dbReference>
<dbReference type="Gene3D" id="3.30.70.1630">
    <property type="match status" value="1"/>
</dbReference>
<dbReference type="Gene3D" id="3.30.70.1400">
    <property type="entry name" value="Aminomethyltransferase beta-barrel domains"/>
    <property type="match status" value="1"/>
</dbReference>
<dbReference type="HAMAP" id="MF_01175">
    <property type="entry name" value="tRNA_modifying_YgfZ"/>
    <property type="match status" value="1"/>
</dbReference>
<dbReference type="InterPro" id="IPR006222">
    <property type="entry name" value="GCV_T_N"/>
</dbReference>
<dbReference type="InterPro" id="IPR029043">
    <property type="entry name" value="GcvT/YgfZ_C"/>
</dbReference>
<dbReference type="InterPro" id="IPR023758">
    <property type="entry name" value="tRNA-modifying_YgfZ"/>
</dbReference>
<dbReference type="InterPro" id="IPR045179">
    <property type="entry name" value="YgfZ/GcvT"/>
</dbReference>
<dbReference type="InterPro" id="IPR017703">
    <property type="entry name" value="YgfZ/GcvT_CS"/>
</dbReference>
<dbReference type="InterPro" id="IPR048451">
    <property type="entry name" value="YgfZ_barrel"/>
</dbReference>
<dbReference type="NCBIfam" id="NF007110">
    <property type="entry name" value="PRK09559.1"/>
    <property type="match status" value="1"/>
</dbReference>
<dbReference type="NCBIfam" id="TIGR03317">
    <property type="entry name" value="ygfZ_signature"/>
    <property type="match status" value="1"/>
</dbReference>
<dbReference type="PANTHER" id="PTHR22602">
    <property type="entry name" value="TRANSFERASE CAF17, MITOCHONDRIAL-RELATED"/>
    <property type="match status" value="1"/>
</dbReference>
<dbReference type="PANTHER" id="PTHR22602:SF0">
    <property type="entry name" value="TRANSFERASE CAF17, MITOCHONDRIAL-RELATED"/>
    <property type="match status" value="1"/>
</dbReference>
<dbReference type="Pfam" id="PF01571">
    <property type="entry name" value="GCV_T"/>
    <property type="match status" value="1"/>
</dbReference>
<dbReference type="Pfam" id="PF21130">
    <property type="entry name" value="YgfZ_barrel"/>
    <property type="match status" value="1"/>
</dbReference>
<dbReference type="SUPFAM" id="SSF101790">
    <property type="entry name" value="Aminomethyltransferase beta-barrel domain"/>
    <property type="match status" value="1"/>
</dbReference>
<dbReference type="SUPFAM" id="SSF103025">
    <property type="entry name" value="Folate-binding domain"/>
    <property type="match status" value="1"/>
</dbReference>
<keyword id="KW-0963">Cytoplasm</keyword>
<keyword id="KW-0290">Folate-binding</keyword>
<keyword id="KW-1185">Reference proteome</keyword>
<keyword id="KW-0819">tRNA processing</keyword>
<protein>
    <recommendedName>
        <fullName evidence="1">tRNA-modifying protein YgfZ</fullName>
    </recommendedName>
</protein>
<name>YGFZ_ECO24</name>
<organism>
    <name type="scientific">Escherichia coli O139:H28 (strain E24377A / ETEC)</name>
    <dbReference type="NCBI Taxonomy" id="331111"/>
    <lineage>
        <taxon>Bacteria</taxon>
        <taxon>Pseudomonadati</taxon>
        <taxon>Pseudomonadota</taxon>
        <taxon>Gammaproteobacteria</taxon>
        <taxon>Enterobacterales</taxon>
        <taxon>Enterobacteriaceae</taxon>
        <taxon>Escherichia</taxon>
    </lineage>
</organism>
<gene>
    <name evidence="1" type="primary">ygfZ</name>
    <name type="ordered locus">EcE24377A_3225</name>
</gene>